<sequence>MSSYSPLVPPAAGFDADGRFRSVAYGDVYHSLSGALGQAEHVFLRGNGLPQRWRGRQAFTVCETGFGLGLNFLALWDAWRNDPARPRCLHMVSIEAHPFARDALRDWLRQLAPDILQGLAGQLADQWPACLPGLHRLEFEGGAVTLTLAFGAASALAPHLRARVDAYFLDGFAPDRNPELWQPALMRDLARMAAPDATLATWACAGSVRQALRDAGFRVRKQPGYGGKWHMTVGVRESAQPEAPADAWALARAADGEGQDEVVVVGGGLAGAGIAQALALRGRPVCVIDAAGPASAHAGHVAAALTPVIARDDNPRARLSRAGSQRALARWAGLRPGAAPRRCGTLQLERDAGRSAALAETLQQLQFPADWVRAVDRDEAAGLAGVPLARGGVFFADGLLVQPAALIPALLGMPGVRRVAGCAAVLRRVAHGWQVLDDAGQLLGQGATVVLANAFGAQALLRDSGLLDPLPRVAQMHALAGEITLLPGQGLGGGPRCIVGGEGYLLPPVDGWCVAGSTYEHGAATARVGPAGQQTNLGKAAGLLGGLPAAWAALAPGQLPGWAGWRAVLPGRLPAVGPLGHAPGVWLAAGYASRGLSWSALAGDLIAACLHGEPLPLPADLLAAVAPR</sequence>
<reference key="1">
    <citation type="journal article" date="2008" name="BMC Genomics">
        <title>The missing link: Bordetella petrii is endowed with both the metabolic versatility of environmental bacteria and virulence traits of pathogenic Bordetellae.</title>
        <authorList>
            <person name="Gross R."/>
            <person name="Guzman C.A."/>
            <person name="Sebaihia M."/>
            <person name="Martin dos Santos V.A.P."/>
            <person name="Pieper D.H."/>
            <person name="Koebnik R."/>
            <person name="Lechner M."/>
            <person name="Bartels D."/>
            <person name="Buhrmester J."/>
            <person name="Choudhuri J.V."/>
            <person name="Ebensen T."/>
            <person name="Gaigalat L."/>
            <person name="Herrmann S."/>
            <person name="Khachane A.N."/>
            <person name="Larisch C."/>
            <person name="Link S."/>
            <person name="Linke B."/>
            <person name="Meyer F."/>
            <person name="Mormann S."/>
            <person name="Nakunst D."/>
            <person name="Rueckert C."/>
            <person name="Schneiker-Bekel S."/>
            <person name="Schulze K."/>
            <person name="Voerholter F.-J."/>
            <person name="Yevsa T."/>
            <person name="Engle J.T."/>
            <person name="Goldman W.E."/>
            <person name="Puehler A."/>
            <person name="Goebel U.B."/>
            <person name="Goesmann A."/>
            <person name="Bloecker H."/>
            <person name="Kaiser O."/>
            <person name="Martinez-Arias R."/>
        </authorList>
    </citation>
    <scope>NUCLEOTIDE SEQUENCE [LARGE SCALE GENOMIC DNA]</scope>
    <source>
        <strain>ATCC BAA-461 / DSM 12804 / CCUG 43448</strain>
    </source>
</reference>
<feature type="chain" id="PRO_0000347946" description="tRNA 5-methylaminomethyl-2-thiouridine biosynthesis bifunctional protein MnmC">
    <location>
        <begin position="1"/>
        <end position="628"/>
    </location>
</feature>
<feature type="region of interest" description="tRNA (mnm(5)s(2)U34)-methyltransferase">
    <location>
        <begin position="1"/>
        <end position="237"/>
    </location>
</feature>
<feature type="region of interest" description="FAD-dependent cmnm(5)s(2)U34 oxidoreductase">
    <location>
        <begin position="265"/>
        <end position="628"/>
    </location>
</feature>
<evidence type="ECO:0000255" key="1">
    <source>
        <dbReference type="HAMAP-Rule" id="MF_01102"/>
    </source>
</evidence>
<evidence type="ECO:0000305" key="2"/>
<keyword id="KW-0963">Cytoplasm</keyword>
<keyword id="KW-0274">FAD</keyword>
<keyword id="KW-0285">Flavoprotein</keyword>
<keyword id="KW-0489">Methyltransferase</keyword>
<keyword id="KW-0511">Multifunctional enzyme</keyword>
<keyword id="KW-0560">Oxidoreductase</keyword>
<keyword id="KW-0949">S-adenosyl-L-methionine</keyword>
<keyword id="KW-0808">Transferase</keyword>
<keyword id="KW-0819">tRNA processing</keyword>
<organism>
    <name type="scientific">Bordetella petrii (strain ATCC BAA-461 / DSM 12804 / CCUG 43448)</name>
    <dbReference type="NCBI Taxonomy" id="340100"/>
    <lineage>
        <taxon>Bacteria</taxon>
        <taxon>Pseudomonadati</taxon>
        <taxon>Pseudomonadota</taxon>
        <taxon>Betaproteobacteria</taxon>
        <taxon>Burkholderiales</taxon>
        <taxon>Alcaligenaceae</taxon>
        <taxon>Bordetella</taxon>
    </lineage>
</organism>
<comment type="function">
    <text evidence="1">Catalyzes the last two steps in the biosynthesis of 5-methylaminomethyl-2-thiouridine (mnm(5)s(2)U) at the wobble position (U34) in tRNA. Catalyzes the FAD-dependent demodification of cmnm(5)s(2)U34 to nm(5)s(2)U34, followed by the transfer of a methyl group from S-adenosyl-L-methionine to nm(5)s(2)U34, to form mnm(5)s(2)U34.</text>
</comment>
<comment type="catalytic activity">
    <reaction evidence="1">
        <text>5-aminomethyl-2-thiouridine(34) in tRNA + S-adenosyl-L-methionine = 5-methylaminomethyl-2-thiouridine(34) in tRNA + S-adenosyl-L-homocysteine + H(+)</text>
        <dbReference type="Rhea" id="RHEA:19569"/>
        <dbReference type="Rhea" id="RHEA-COMP:10195"/>
        <dbReference type="Rhea" id="RHEA-COMP:10197"/>
        <dbReference type="ChEBI" id="CHEBI:15378"/>
        <dbReference type="ChEBI" id="CHEBI:57856"/>
        <dbReference type="ChEBI" id="CHEBI:59789"/>
        <dbReference type="ChEBI" id="CHEBI:74454"/>
        <dbReference type="ChEBI" id="CHEBI:74455"/>
        <dbReference type="EC" id="2.1.1.61"/>
    </reaction>
</comment>
<comment type="cofactor">
    <cofactor evidence="1">
        <name>FAD</name>
        <dbReference type="ChEBI" id="CHEBI:57692"/>
    </cofactor>
</comment>
<comment type="subcellular location">
    <subcellularLocation>
        <location evidence="1">Cytoplasm</location>
    </subcellularLocation>
</comment>
<comment type="similarity">
    <text evidence="1">In the N-terminal section; belongs to the methyltransferase superfamily. tRNA (mnm(5)s(2)U34)-methyltransferase family.</text>
</comment>
<comment type="similarity">
    <text evidence="1">In the C-terminal section; belongs to the DAO family.</text>
</comment>
<comment type="sequence caution" evidence="2">
    <conflict type="erroneous initiation">
        <sequence resource="EMBL-CDS" id="CAP41049"/>
    </conflict>
</comment>
<name>MNMC_BORPD</name>
<proteinExistence type="inferred from homology"/>
<accession>A9I518</accession>
<gene>
    <name evidence="1" type="primary">mnmC</name>
    <name type="ordered locus">Bpet0718</name>
</gene>
<protein>
    <recommendedName>
        <fullName evidence="1">tRNA 5-methylaminomethyl-2-thiouridine biosynthesis bifunctional protein MnmC</fullName>
        <shortName evidence="1">tRNA mnm(5)s(2)U biosynthesis bifunctional protein</shortName>
    </recommendedName>
    <domain>
        <recommendedName>
            <fullName evidence="1">tRNA (mnm(5)s(2)U34)-methyltransferase</fullName>
            <ecNumber evidence="1">2.1.1.61</ecNumber>
        </recommendedName>
    </domain>
    <domain>
        <recommendedName>
            <fullName evidence="1">FAD-dependent cmnm(5)s(2)U34 oxidoreductase</fullName>
            <ecNumber evidence="1">1.5.-.-</ecNumber>
        </recommendedName>
    </domain>
</protein>
<dbReference type="EC" id="2.1.1.61" evidence="1"/>
<dbReference type="EC" id="1.5.-.-" evidence="1"/>
<dbReference type="EMBL" id="AM902716">
    <property type="protein sequence ID" value="CAP41049.1"/>
    <property type="status" value="ALT_INIT"/>
    <property type="molecule type" value="Genomic_DNA"/>
</dbReference>
<dbReference type="SMR" id="A9I518"/>
<dbReference type="STRING" id="94624.Bpet0718"/>
<dbReference type="KEGG" id="bpt:Bpet0718"/>
<dbReference type="eggNOG" id="COG0665">
    <property type="taxonomic scope" value="Bacteria"/>
</dbReference>
<dbReference type="eggNOG" id="COG4121">
    <property type="taxonomic scope" value="Bacteria"/>
</dbReference>
<dbReference type="Proteomes" id="UP000001225">
    <property type="component" value="Chromosome"/>
</dbReference>
<dbReference type="GO" id="GO:0005737">
    <property type="term" value="C:cytoplasm"/>
    <property type="evidence" value="ECO:0007669"/>
    <property type="project" value="UniProtKB-SubCell"/>
</dbReference>
<dbReference type="GO" id="GO:0050660">
    <property type="term" value="F:flavin adenine dinucleotide binding"/>
    <property type="evidence" value="ECO:0007669"/>
    <property type="project" value="UniProtKB-UniRule"/>
</dbReference>
<dbReference type="GO" id="GO:0016645">
    <property type="term" value="F:oxidoreductase activity, acting on the CH-NH group of donors"/>
    <property type="evidence" value="ECO:0007669"/>
    <property type="project" value="InterPro"/>
</dbReference>
<dbReference type="GO" id="GO:0004808">
    <property type="term" value="F:tRNA (5-methylaminomethyl-2-thiouridylate)(34)-methyltransferase activity"/>
    <property type="evidence" value="ECO:0007669"/>
    <property type="project" value="UniProtKB-EC"/>
</dbReference>
<dbReference type="GO" id="GO:0032259">
    <property type="term" value="P:methylation"/>
    <property type="evidence" value="ECO:0007669"/>
    <property type="project" value="UniProtKB-KW"/>
</dbReference>
<dbReference type="GO" id="GO:0002097">
    <property type="term" value="P:tRNA wobble base modification"/>
    <property type="evidence" value="ECO:0007669"/>
    <property type="project" value="UniProtKB-UniRule"/>
</dbReference>
<dbReference type="Gene3D" id="3.30.9.10">
    <property type="entry name" value="D-Amino Acid Oxidase, subunit A, domain 2"/>
    <property type="match status" value="1"/>
</dbReference>
<dbReference type="Gene3D" id="3.50.50.60">
    <property type="entry name" value="FAD/NAD(P)-binding domain"/>
    <property type="match status" value="1"/>
</dbReference>
<dbReference type="Gene3D" id="3.40.50.150">
    <property type="entry name" value="Vaccinia Virus protein VP39"/>
    <property type="match status" value="1"/>
</dbReference>
<dbReference type="HAMAP" id="MF_01102">
    <property type="entry name" value="MnmC"/>
    <property type="match status" value="1"/>
</dbReference>
<dbReference type="InterPro" id="IPR006076">
    <property type="entry name" value="FAD-dep_OxRdtase"/>
</dbReference>
<dbReference type="InterPro" id="IPR036188">
    <property type="entry name" value="FAD/NAD-bd_sf"/>
</dbReference>
<dbReference type="InterPro" id="IPR008471">
    <property type="entry name" value="MnmC-like_methylTransf"/>
</dbReference>
<dbReference type="InterPro" id="IPR029063">
    <property type="entry name" value="SAM-dependent_MTases_sf"/>
</dbReference>
<dbReference type="InterPro" id="IPR023032">
    <property type="entry name" value="tRNA_MAMT_biosynth_bifunc_MnmC"/>
</dbReference>
<dbReference type="InterPro" id="IPR047785">
    <property type="entry name" value="tRNA_MNMC2"/>
</dbReference>
<dbReference type="InterPro" id="IPR017610">
    <property type="entry name" value="tRNA_S-uridine_synth_MnmC_C"/>
</dbReference>
<dbReference type="NCBIfam" id="TIGR03197">
    <property type="entry name" value="MnmC_Cterm"/>
    <property type="match status" value="1"/>
</dbReference>
<dbReference type="NCBIfam" id="NF033855">
    <property type="entry name" value="tRNA_MNMC2"/>
    <property type="match status" value="1"/>
</dbReference>
<dbReference type="PANTHER" id="PTHR13847">
    <property type="entry name" value="SARCOSINE DEHYDROGENASE-RELATED"/>
    <property type="match status" value="1"/>
</dbReference>
<dbReference type="PANTHER" id="PTHR13847:SF283">
    <property type="entry name" value="TRNA 5-METHYLAMINOMETHYL-2-THIOURIDINE BIOSYNTHESIS BIFUNCTIONAL PROTEIN MNMC"/>
    <property type="match status" value="1"/>
</dbReference>
<dbReference type="Pfam" id="PF01266">
    <property type="entry name" value="DAO"/>
    <property type="match status" value="1"/>
</dbReference>
<dbReference type="Pfam" id="PF05430">
    <property type="entry name" value="Methyltransf_30"/>
    <property type="match status" value="1"/>
</dbReference>
<dbReference type="SUPFAM" id="SSF51905">
    <property type="entry name" value="FAD/NAD(P)-binding domain"/>
    <property type="match status" value="1"/>
</dbReference>
<dbReference type="SUPFAM" id="SSF53335">
    <property type="entry name" value="S-adenosyl-L-methionine-dependent methyltransferases"/>
    <property type="match status" value="1"/>
</dbReference>